<dbReference type="EMBL" id="M37761">
    <property type="protein sequence ID" value="AAA37358.1"/>
    <property type="molecule type" value="mRNA"/>
</dbReference>
<dbReference type="EMBL" id="X66449">
    <property type="protein sequence ID" value="CAA47065.1"/>
    <property type="molecule type" value="mRNA"/>
</dbReference>
<dbReference type="EMBL" id="X52278">
    <property type="protein sequence ID" value="CAA36521.1"/>
    <property type="molecule type" value="mRNA"/>
</dbReference>
<dbReference type="EMBL" id="BC003832">
    <property type="protein sequence ID" value="AAH03832.1"/>
    <property type="molecule type" value="mRNA"/>
</dbReference>
<dbReference type="EMBL" id="BC010774">
    <property type="protein sequence ID" value="AAH10774.1"/>
    <property type="molecule type" value="mRNA"/>
</dbReference>
<dbReference type="CCDS" id="CCDS38506.1"/>
<dbReference type="PIR" id="A54314">
    <property type="entry name" value="A54314"/>
</dbReference>
<dbReference type="RefSeq" id="NP_001404899.1">
    <property type="nucleotide sequence ID" value="NM_001417970.1"/>
</dbReference>
<dbReference type="RefSeq" id="NP_001404900.1">
    <property type="nucleotide sequence ID" value="NM_001417971.1"/>
</dbReference>
<dbReference type="RefSeq" id="NP_001404901.1">
    <property type="nucleotide sequence ID" value="NM_001417972.1"/>
</dbReference>
<dbReference type="RefSeq" id="NP_035443.1">
    <property type="nucleotide sequence ID" value="NM_011313.3"/>
</dbReference>
<dbReference type="PDB" id="4P2Y">
    <property type="method" value="X-ray"/>
    <property type="resolution" value="2.30 A"/>
    <property type="chains" value="B=1-89"/>
</dbReference>
<dbReference type="PDBsum" id="4P2Y"/>
<dbReference type="SMR" id="P14069"/>
<dbReference type="BioGRID" id="203055">
    <property type="interactions" value="18"/>
</dbReference>
<dbReference type="FunCoup" id="P14069">
    <property type="interactions" value="136"/>
</dbReference>
<dbReference type="IntAct" id="P14069">
    <property type="interactions" value="4"/>
</dbReference>
<dbReference type="MINT" id="P14069"/>
<dbReference type="STRING" id="10090.ENSMUSP00000001051"/>
<dbReference type="iPTMnet" id="P14069"/>
<dbReference type="PhosphoSitePlus" id="P14069"/>
<dbReference type="SwissPalm" id="P14069"/>
<dbReference type="jPOST" id="P14069"/>
<dbReference type="PaxDb" id="10090-ENSMUSP00000001051"/>
<dbReference type="PeptideAtlas" id="P14069"/>
<dbReference type="ProteomicsDB" id="255434"/>
<dbReference type="Pumba" id="P14069"/>
<dbReference type="Antibodypedia" id="1680">
    <property type="antibodies" value="536 antibodies from 40 providers"/>
</dbReference>
<dbReference type="DNASU" id="20200"/>
<dbReference type="Ensembl" id="ENSMUST00000001051.9">
    <property type="protein sequence ID" value="ENSMUSP00000001051.5"/>
    <property type="gene ID" value="ENSMUSG00000001025.9"/>
</dbReference>
<dbReference type="Ensembl" id="ENSMUST00000198128.2">
    <property type="protein sequence ID" value="ENSMUSP00000143111.2"/>
    <property type="gene ID" value="ENSMUSG00000001025.9"/>
</dbReference>
<dbReference type="Ensembl" id="ENSMUST00000200289.2">
    <property type="protein sequence ID" value="ENSMUSP00000143720.2"/>
    <property type="gene ID" value="ENSMUSG00000001025.9"/>
</dbReference>
<dbReference type="GeneID" id="20200"/>
<dbReference type="KEGG" id="mmu:20200"/>
<dbReference type="UCSC" id="uc008qdb.1">
    <property type="organism name" value="mouse"/>
</dbReference>
<dbReference type="AGR" id="MGI:1339467"/>
<dbReference type="CTD" id="6277"/>
<dbReference type="MGI" id="MGI:1339467">
    <property type="gene designation" value="S100a6"/>
</dbReference>
<dbReference type="VEuPathDB" id="HostDB:ENSMUSG00000001025"/>
<dbReference type="eggNOG" id="ENOG502S6IN">
    <property type="taxonomic scope" value="Eukaryota"/>
</dbReference>
<dbReference type="GeneTree" id="ENSGT00940000161896"/>
<dbReference type="HOGENOM" id="CLU_138624_2_0_1"/>
<dbReference type="InParanoid" id="P14069"/>
<dbReference type="OMA" id="FVAIFHK"/>
<dbReference type="OrthoDB" id="8881129at2759"/>
<dbReference type="PhylomeDB" id="P14069"/>
<dbReference type="TreeFam" id="TF332727"/>
<dbReference type="BioGRID-ORCS" id="20200">
    <property type="hits" value="1 hit in 78 CRISPR screens"/>
</dbReference>
<dbReference type="ChiTaRS" id="S100a6">
    <property type="organism name" value="mouse"/>
</dbReference>
<dbReference type="EvolutionaryTrace" id="P14069"/>
<dbReference type="PRO" id="PR:P14069"/>
<dbReference type="Proteomes" id="UP000000589">
    <property type="component" value="Chromosome 3"/>
</dbReference>
<dbReference type="RNAct" id="P14069">
    <property type="molecule type" value="protein"/>
</dbReference>
<dbReference type="Bgee" id="ENSMUSG00000001025">
    <property type="expression patterns" value="Expressed in substantia propria of cornea and 259 other cell types or tissues"/>
</dbReference>
<dbReference type="ExpressionAtlas" id="P14069">
    <property type="expression patterns" value="baseline and differential"/>
</dbReference>
<dbReference type="GO" id="GO:0062023">
    <property type="term" value="C:collagen-containing extracellular matrix"/>
    <property type="evidence" value="ECO:0007005"/>
    <property type="project" value="BHF-UCL"/>
</dbReference>
<dbReference type="GO" id="GO:0009898">
    <property type="term" value="C:cytoplasmic side of plasma membrane"/>
    <property type="evidence" value="ECO:0000250"/>
    <property type="project" value="UniProtKB"/>
</dbReference>
<dbReference type="GO" id="GO:0005829">
    <property type="term" value="C:cytosol"/>
    <property type="evidence" value="ECO:0000250"/>
    <property type="project" value="UniProtKB"/>
</dbReference>
<dbReference type="GO" id="GO:0005635">
    <property type="term" value="C:nuclear envelope"/>
    <property type="evidence" value="ECO:0007669"/>
    <property type="project" value="UniProtKB-SubCell"/>
</dbReference>
<dbReference type="GO" id="GO:0048471">
    <property type="term" value="C:perinuclear region of cytoplasm"/>
    <property type="evidence" value="ECO:0007669"/>
    <property type="project" value="Ensembl"/>
</dbReference>
<dbReference type="GO" id="GO:0001726">
    <property type="term" value="C:ruffle"/>
    <property type="evidence" value="ECO:0007669"/>
    <property type="project" value="Ensembl"/>
</dbReference>
<dbReference type="GO" id="GO:0005509">
    <property type="term" value="F:calcium ion binding"/>
    <property type="evidence" value="ECO:0000314"/>
    <property type="project" value="UniProtKB"/>
</dbReference>
<dbReference type="GO" id="GO:0048306">
    <property type="term" value="F:calcium-dependent protein binding"/>
    <property type="evidence" value="ECO:0007669"/>
    <property type="project" value="Ensembl"/>
</dbReference>
<dbReference type="GO" id="GO:0015075">
    <property type="term" value="F:monoatomic ion transmembrane transporter activity"/>
    <property type="evidence" value="ECO:0007669"/>
    <property type="project" value="Ensembl"/>
</dbReference>
<dbReference type="GO" id="GO:0042803">
    <property type="term" value="F:protein homodimerization activity"/>
    <property type="evidence" value="ECO:0007669"/>
    <property type="project" value="Ensembl"/>
</dbReference>
<dbReference type="GO" id="GO:0044548">
    <property type="term" value="F:S100 protein binding"/>
    <property type="evidence" value="ECO:0007669"/>
    <property type="project" value="Ensembl"/>
</dbReference>
<dbReference type="GO" id="GO:0005523">
    <property type="term" value="F:tropomyosin binding"/>
    <property type="evidence" value="ECO:0007669"/>
    <property type="project" value="Ensembl"/>
</dbReference>
<dbReference type="GO" id="GO:0008270">
    <property type="term" value="F:zinc ion binding"/>
    <property type="evidence" value="ECO:0000314"/>
    <property type="project" value="UniProtKB"/>
</dbReference>
<dbReference type="CDD" id="cd05029">
    <property type="entry name" value="S-100A6"/>
    <property type="match status" value="1"/>
</dbReference>
<dbReference type="FunFam" id="1.10.238.10:FF:000044">
    <property type="entry name" value="Protein S100"/>
    <property type="match status" value="1"/>
</dbReference>
<dbReference type="Gene3D" id="1.10.238.10">
    <property type="entry name" value="EF-hand"/>
    <property type="match status" value="1"/>
</dbReference>
<dbReference type="InterPro" id="IPR011992">
    <property type="entry name" value="EF-hand-dom_pair"/>
</dbReference>
<dbReference type="InterPro" id="IPR018247">
    <property type="entry name" value="EF_Hand_1_Ca_BS"/>
</dbReference>
<dbReference type="InterPro" id="IPR002048">
    <property type="entry name" value="EF_hand_dom"/>
</dbReference>
<dbReference type="InterPro" id="IPR034118">
    <property type="entry name" value="S-100A6"/>
</dbReference>
<dbReference type="InterPro" id="IPR001751">
    <property type="entry name" value="S100/CaBP7/8-like_CS"/>
</dbReference>
<dbReference type="InterPro" id="IPR013787">
    <property type="entry name" value="S100_Ca-bd_sub"/>
</dbReference>
<dbReference type="PANTHER" id="PTHR11639:SF80">
    <property type="entry name" value="PROTEIN S100-A6"/>
    <property type="match status" value="1"/>
</dbReference>
<dbReference type="PANTHER" id="PTHR11639">
    <property type="entry name" value="S100 CALCIUM-BINDING PROTEIN"/>
    <property type="match status" value="1"/>
</dbReference>
<dbReference type="Pfam" id="PF01023">
    <property type="entry name" value="S_100"/>
    <property type="match status" value="1"/>
</dbReference>
<dbReference type="SMART" id="SM00054">
    <property type="entry name" value="EFh"/>
    <property type="match status" value="1"/>
</dbReference>
<dbReference type="SMART" id="SM01394">
    <property type="entry name" value="S_100"/>
    <property type="match status" value="1"/>
</dbReference>
<dbReference type="SUPFAM" id="SSF47473">
    <property type="entry name" value="EF-hand"/>
    <property type="match status" value="1"/>
</dbReference>
<dbReference type="PROSITE" id="PS00018">
    <property type="entry name" value="EF_HAND_1"/>
    <property type="match status" value="1"/>
</dbReference>
<dbReference type="PROSITE" id="PS50222">
    <property type="entry name" value="EF_HAND_2"/>
    <property type="match status" value="1"/>
</dbReference>
<dbReference type="PROSITE" id="PS00303">
    <property type="entry name" value="S100_CABP"/>
    <property type="match status" value="1"/>
</dbReference>
<accession>P14069</accession>
<proteinExistence type="evidence at protein level"/>
<comment type="function">
    <text evidence="1">May function as calcium sensor and modulator, contributing to cellular calcium signaling. May function by interacting with other proteins, such as TPR-containing proteins, and indirectly play a role in many physiological processes such as the reorganization of the actin cytoskeleton and in cell motility. Binds 2 calcium ions. Calcium binding is cooperative (By similarity).</text>
</comment>
<comment type="subunit">
    <text evidence="1">Homodimer; head to tail assembly of 2 subunits. Interacts with CACYBP in a calcium-dependent manner. Interacts with ANXA2 and ANXA11 (via N-terminus). Interacts with SUGT1. Interacts with TP53; has higher affinity for TP53 that is phosphorylated on its N-terminal domain, and lower affinity for TP53 that is phosphorylated on its C-terminal domain. Interacts with tropomyosin. Interacts with FKBP4. Interacts with PPP5C (via TPR repeats); the interaction is calcium-dependent and modulates PPP5C activity. Interacts with TPPP; this interaction inhibits TPPP dimerization (By similarity).</text>
</comment>
<comment type="interaction">
    <interactant intactId="EBI-6478740">
        <id>P14069</id>
    </interactant>
    <interactant intactId="EBI-767146">
        <id>Q9CXW3</id>
        <label>Cacybp</label>
    </interactant>
    <organismsDiffer>false</organismsDiffer>
    <experiments>4</experiments>
</comment>
<comment type="subcellular location">
    <subcellularLocation>
        <location evidence="1">Nucleus envelope</location>
    </subcellularLocation>
    <subcellularLocation>
        <location evidence="1">Cytoplasm</location>
    </subcellularLocation>
    <subcellularLocation>
        <location evidence="1">Cell membrane</location>
        <topology evidence="1">Peripheral membrane protein</topology>
        <orientation evidence="1">Cytoplasmic side</orientation>
    </subcellularLocation>
</comment>
<comment type="similarity">
    <text evidence="4">Belongs to the S-100 family.</text>
</comment>
<reference key="1">
    <citation type="journal article" date="1993" name="J. Cell Sci.">
        <title>The gene encoding the calcium binding protein calcyclin is expressed at sites of exocytosis in the mouse.</title>
        <authorList>
            <person name="Timmons P.M."/>
            <person name="Chan C.T.J."/>
            <person name="Rigby P.W.J."/>
            <person name="Poirier F."/>
        </authorList>
    </citation>
    <scope>NUCLEOTIDE SEQUENCE [MRNA]</scope>
    <source>
        <strain>129</strain>
    </source>
</reference>
<reference key="2">
    <citation type="journal article" date="1990" name="Cell Growth Differ.">
        <title>Identification of a serum-inducible messenger RNA (5B10) as the mouse homologue of calcyclin: tissue distribution and expression in metastatic, ras-transformed NIH 3T3 cells.</title>
        <authorList>
            <person name="Guo X."/>
            <person name="Chambers A.F."/>
            <person name="Parfett C.L."/>
            <person name="Waterhouse P."/>
            <person name="Murphy L.C."/>
            <person name="Reid R.E."/>
            <person name="Craig A.M."/>
            <person name="Edwards D.R."/>
            <person name="Denhardt D.T."/>
        </authorList>
    </citation>
    <scope>NUCLEOTIDE SEQUENCE [MRNA]</scope>
</reference>
<reference key="3">
    <citation type="journal article" date="1991" name="J. Invest. Dermatol.">
        <title>Expression of calcyclin, a calcium-binding protein, in the keratogenous region of growing hair follicles.</title>
        <authorList>
            <person name="Wood L."/>
            <person name="Carter D."/>
            <person name="Mills M."/>
            <person name="Hatzenbuhler N."/>
            <person name="Vogeli G."/>
        </authorList>
    </citation>
    <scope>NUCLEOTIDE SEQUENCE [MRNA]</scope>
    <source>
        <strain>TUC CF1</strain>
    </source>
</reference>
<reference key="4">
    <citation type="journal article" date="2004" name="Genome Res.">
        <title>The status, quality, and expansion of the NIH full-length cDNA project: the Mammalian Gene Collection (MGC).</title>
        <authorList>
            <consortium name="The MGC Project Team"/>
        </authorList>
    </citation>
    <scope>NUCLEOTIDE SEQUENCE [LARGE SCALE MRNA]</scope>
    <source>
        <tissue>Colon</tissue>
        <tissue>Mammary tumor</tissue>
    </source>
</reference>
<reference key="5">
    <citation type="journal article" date="1989" name="Biochem. J.">
        <title>Calcium-binding protein from mouse Ehrlich ascites-tumour cells is homologous to human calcyclin.</title>
        <authorList>
            <person name="Kuznicki J."/>
            <person name="Filipek A."/>
            <person name="Hunziker P.E."/>
            <person name="Huber S."/>
            <person name="Heizmann C.W."/>
        </authorList>
    </citation>
    <scope>PROTEIN SEQUENCE OF 56-69</scope>
</reference>
<reference key="6">
    <citation type="journal article" date="1991" name="Eur. J. Biochem.">
        <title>Characterization of the cell-cycle-regulated protein calcyclin from Ehrlich ascites tumor cells. Identification of two binding proteins obtained by Ca2(+)-dependent affinity chromatography.</title>
        <authorList>
            <person name="Filipek A."/>
            <person name="Gerke V."/>
            <person name="Weber K."/>
            <person name="Kuznicki J."/>
        </authorList>
    </citation>
    <scope>PROTEIN SEQUENCE OF 6-89</scope>
    <scope>INTERACTION WITH OTHER PROTEINS</scope>
</reference>
<reference key="7">
    <citation type="journal article" date="1991" name="Endocrinology">
        <title>Purification and characterization of mouse decidual calcyclin: a novel stimulator of mouse placental lactogen-II secretion.</title>
        <authorList>
            <person name="Thordarson G."/>
            <person name="Southard J.N."/>
            <person name="Talamantes F."/>
        </authorList>
    </citation>
    <scope>PROTEIN SEQUENCE OF 24-33 AND 37-89</scope>
</reference>
<reference key="8">
    <citation type="journal article" date="2002" name="J. Biol. Chem.">
        <title>CacyBP/SIP, a calcyclin and Siah-1-interacting protein, binds EF-hand proteins of the S100 family.</title>
        <authorList>
            <person name="Filipek A."/>
            <person name="Jastrzebska B."/>
            <person name="Nowotny M."/>
            <person name="Kuznicki J."/>
        </authorList>
    </citation>
    <scope>INTERACTION WITH CACYBP</scope>
</reference>
<reference key="9">
    <citation type="journal article" date="2010" name="Cell">
        <title>A tissue-specific atlas of mouse protein phosphorylation and expression.</title>
        <authorList>
            <person name="Huttlin E.L."/>
            <person name="Jedrychowski M.P."/>
            <person name="Elias J.E."/>
            <person name="Goswami T."/>
            <person name="Rad R."/>
            <person name="Beausoleil S.A."/>
            <person name="Villen J."/>
            <person name="Haas W."/>
            <person name="Sowa M.E."/>
            <person name="Gygi S.P."/>
        </authorList>
    </citation>
    <scope>IDENTIFICATION BY MASS SPECTROMETRY [LARGE SCALE ANALYSIS]</scope>
    <source>
        <tissue>Lung</tissue>
        <tissue>Testis</tissue>
    </source>
</reference>
<reference key="10">
    <citation type="journal article" date="2013" name="Mol. Cell">
        <title>SIRT5-mediated lysine desuccinylation impacts diverse metabolic pathways.</title>
        <authorList>
            <person name="Park J."/>
            <person name="Chen Y."/>
            <person name="Tishkoff D.X."/>
            <person name="Peng C."/>
            <person name="Tan M."/>
            <person name="Dai L."/>
            <person name="Xie Z."/>
            <person name="Zhang Y."/>
            <person name="Zwaans B.M."/>
            <person name="Skinner M.E."/>
            <person name="Lombard D.B."/>
            <person name="Zhao Y."/>
        </authorList>
    </citation>
    <scope>ACETYLATION [LARGE SCALE ANALYSIS] AT LYS-47</scope>
    <scope>SUCCINYLATION [LARGE SCALE ANALYSIS] AT LYS-47</scope>
    <scope>IDENTIFICATION BY MASS SPECTROMETRY [LARGE SCALE ANALYSIS]</scope>
    <source>
        <tissue>Embryonic fibroblast</tissue>
    </source>
</reference>
<keyword id="KW-0002">3D-structure</keyword>
<keyword id="KW-0007">Acetylation</keyword>
<keyword id="KW-0106">Calcium</keyword>
<keyword id="KW-1003">Cell membrane</keyword>
<keyword id="KW-0963">Cytoplasm</keyword>
<keyword id="KW-0903">Direct protein sequencing</keyword>
<keyword id="KW-0472">Membrane</keyword>
<keyword id="KW-0479">Metal-binding</keyword>
<keyword id="KW-0539">Nucleus</keyword>
<keyword id="KW-0597">Phosphoprotein</keyword>
<keyword id="KW-1185">Reference proteome</keyword>
<keyword id="KW-0677">Repeat</keyword>
<name>S10A6_MOUSE</name>
<gene>
    <name type="primary">S100a6</name>
    <name type="synonym">Cacy</name>
</gene>
<evidence type="ECO:0000250" key="1"/>
<evidence type="ECO:0000250" key="2">
    <source>
        <dbReference type="UniProtKB" id="P06703"/>
    </source>
</evidence>
<evidence type="ECO:0000255" key="3">
    <source>
        <dbReference type="PROSITE-ProRule" id="PRU00448"/>
    </source>
</evidence>
<evidence type="ECO:0000305" key="4"/>
<evidence type="ECO:0007744" key="5">
    <source>
    </source>
</evidence>
<evidence type="ECO:0007829" key="6">
    <source>
        <dbReference type="PDB" id="4P2Y"/>
    </source>
</evidence>
<sequence>MACPLDQAIGLLVAIFHKYSGKEGDKHTLSKKELKELIQKELTIGSKLQDAEIARLMDDLDRNKDQEVNFQEYVAFLGALALIYNEALK</sequence>
<feature type="chain" id="PRO_0000143985" description="Protein S100-A6">
    <location>
        <begin position="1"/>
        <end position="89"/>
    </location>
</feature>
<feature type="domain" description="EF-hand 1" evidence="4">
    <location>
        <begin position="12"/>
        <end position="47"/>
    </location>
</feature>
<feature type="domain" description="EF-hand 2" evidence="3">
    <location>
        <begin position="48"/>
        <end position="83"/>
    </location>
</feature>
<feature type="binding site" evidence="4">
    <location>
        <position position="28"/>
    </location>
    <ligand>
        <name>Ca(2+)</name>
        <dbReference type="ChEBI" id="CHEBI:29108"/>
        <label>1</label>
    </ligand>
</feature>
<feature type="binding site" evidence="4">
    <location>
        <position position="33"/>
    </location>
    <ligand>
        <name>Ca(2+)</name>
        <dbReference type="ChEBI" id="CHEBI:29108"/>
        <label>1</label>
    </ligand>
</feature>
<feature type="binding site" evidence="3">
    <location>
        <position position="61"/>
    </location>
    <ligand>
        <name>Ca(2+)</name>
        <dbReference type="ChEBI" id="CHEBI:29108"/>
        <label>2</label>
    </ligand>
</feature>
<feature type="binding site" evidence="3">
    <location>
        <position position="63"/>
    </location>
    <ligand>
        <name>Ca(2+)</name>
        <dbReference type="ChEBI" id="CHEBI:29108"/>
        <label>2</label>
    </ligand>
</feature>
<feature type="binding site" evidence="3">
    <location>
        <position position="65"/>
    </location>
    <ligand>
        <name>Ca(2+)</name>
        <dbReference type="ChEBI" id="CHEBI:29108"/>
        <label>2</label>
    </ligand>
</feature>
<feature type="binding site" evidence="3">
    <location>
        <position position="67"/>
    </location>
    <ligand>
        <name>Ca(2+)</name>
        <dbReference type="ChEBI" id="CHEBI:29108"/>
        <label>2</label>
    </ligand>
</feature>
<feature type="binding site" evidence="3">
    <location>
        <position position="72"/>
    </location>
    <ligand>
        <name>Ca(2+)</name>
        <dbReference type="ChEBI" id="CHEBI:29108"/>
        <label>2</label>
    </ligand>
</feature>
<feature type="modified residue" description="N6-acetyllysine" evidence="2">
    <location>
        <position position="40"/>
    </location>
</feature>
<feature type="modified residue" description="Phosphoserine" evidence="2">
    <location>
        <position position="46"/>
    </location>
</feature>
<feature type="modified residue" description="N6-acetyllysine; alternate" evidence="5">
    <location>
        <position position="47"/>
    </location>
</feature>
<feature type="modified residue" description="N6-succinyllysine; alternate" evidence="5">
    <location>
        <position position="47"/>
    </location>
</feature>
<feature type="sequence conflict" description="In Ref. 2; CAA36521." evidence="4" ref="2">
    <original>A</original>
    <variation>R</variation>
    <location>
        <position position="51"/>
    </location>
</feature>
<feature type="helix" evidence="6">
    <location>
        <begin position="4"/>
        <end position="20"/>
    </location>
</feature>
<feature type="strand" evidence="6">
    <location>
        <begin position="22"/>
        <end position="25"/>
    </location>
</feature>
<feature type="helix" evidence="6">
    <location>
        <begin position="31"/>
        <end position="41"/>
    </location>
</feature>
<feature type="helix" evidence="6">
    <location>
        <begin position="43"/>
        <end position="45"/>
    </location>
</feature>
<feature type="helix" evidence="6">
    <location>
        <begin position="50"/>
        <end position="60"/>
    </location>
</feature>
<feature type="strand" evidence="6">
    <location>
        <begin position="62"/>
        <end position="66"/>
    </location>
</feature>
<feature type="helix" evidence="6">
    <location>
        <begin position="70"/>
        <end position="88"/>
    </location>
</feature>
<protein>
    <recommendedName>
        <fullName>Protein S100-A6</fullName>
    </recommendedName>
    <alternativeName>
        <fullName>5B10</fullName>
    </alternativeName>
    <alternativeName>
        <fullName>Calcyclin</fullName>
    </alternativeName>
    <alternativeName>
        <fullName>Prolactin receptor-associated protein</fullName>
    </alternativeName>
    <alternativeName>
        <fullName>S100 calcium-binding protein A6</fullName>
    </alternativeName>
</protein>
<organism>
    <name type="scientific">Mus musculus</name>
    <name type="common">Mouse</name>
    <dbReference type="NCBI Taxonomy" id="10090"/>
    <lineage>
        <taxon>Eukaryota</taxon>
        <taxon>Metazoa</taxon>
        <taxon>Chordata</taxon>
        <taxon>Craniata</taxon>
        <taxon>Vertebrata</taxon>
        <taxon>Euteleostomi</taxon>
        <taxon>Mammalia</taxon>
        <taxon>Eutheria</taxon>
        <taxon>Euarchontoglires</taxon>
        <taxon>Glires</taxon>
        <taxon>Rodentia</taxon>
        <taxon>Myomorpha</taxon>
        <taxon>Muroidea</taxon>
        <taxon>Muridae</taxon>
        <taxon>Murinae</taxon>
        <taxon>Mus</taxon>
        <taxon>Mus</taxon>
    </lineage>
</organism>